<organism>
    <name type="scientific">Gorilla gorilla gorilla</name>
    <name type="common">Western lowland gorilla</name>
    <dbReference type="NCBI Taxonomy" id="9595"/>
    <lineage>
        <taxon>Eukaryota</taxon>
        <taxon>Metazoa</taxon>
        <taxon>Chordata</taxon>
        <taxon>Craniata</taxon>
        <taxon>Vertebrata</taxon>
        <taxon>Euteleostomi</taxon>
        <taxon>Mammalia</taxon>
        <taxon>Eutheria</taxon>
        <taxon>Euarchontoglires</taxon>
        <taxon>Primates</taxon>
        <taxon>Haplorrhini</taxon>
        <taxon>Catarrhini</taxon>
        <taxon>Hominidae</taxon>
        <taxon>Gorilla</taxon>
    </lineage>
</organism>
<accession>P61554</accession>
<comment type="function">
    <text evidence="1">This endogenous retroviral envelope protein has retained its original fusogenic properties and participates in trophoblast fusion and the formation of a syncytium during placenta morphogenesis. The interaction with MFSD2A is apparently important for this process (By similarity).</text>
</comment>
<comment type="function">
    <text evidence="6">Endogenous envelope proteins may have kept, lost or modified their original function during evolution but this one can still make pseudotypes with MLV, HIV-1 or SIV-1 virions and confer infectivity. Retroviral envelope proteins mediate receptor recognition and membrane fusion during early infection. The surface protein mediates receptor recognition, while the transmembrane protein anchors the envelope heterodimer to the viral membrane through one transmembrane domain. The other hydrophobic domain, called fusion peptide, mediates fusion of the viral membrane with the target cell membrane (PubMed:14694139).</text>
</comment>
<comment type="subunit">
    <text evidence="1">The surface and transmembrane proteins form a heterodimer. They are attached by non-covalent interactions or by a labile interchain disulfide bond (By similarity).</text>
</comment>
<comment type="subcellular location">
    <subcellularLocation>
        <location evidence="7">Virion</location>
    </subcellularLocation>
</comment>
<comment type="subcellular location">
    <molecule>Transmembrane protein</molecule>
    <subcellularLocation>
        <location evidence="7">Cell membrane</location>
        <topology evidence="5">Single-pass membrane protein</topology>
    </subcellularLocation>
</comment>
<comment type="subcellular location">
    <molecule>Surface protein</molecule>
    <subcellularLocation>
        <location evidence="7">Cell membrane</location>
        <topology evidence="7">Peripheral membrane protein</topology>
    </subcellularLocation>
    <text evidence="4">The surface protein is not anchored to the membrane, but localizes to the extracellular surface through its binding to TM.</text>
</comment>
<comment type="domain">
    <text evidence="1">The CKS-17 immunosuppressive domain is present in many retroviral envelope proteins. As a synthetic peptide, it inhibits immune function in vitro and in vivo (By similarity).</text>
</comment>
<comment type="PTM">
    <text evidence="1">Specific enzymatic cleavages in vivo yield the mature SU and TM proteins.</text>
</comment>
<comment type="PTM">
    <text evidence="1">The CXXC motif is highly conserved across a broad range of retroviral envelope proteins. It is thought to participate in the formation of a labile disulfide bond possibly with the CX6CC motif present in the transmembrane protein (By similarity).</text>
</comment>
<comment type="miscellaneous">
    <text>Ortholog of the human HERV-FRD_6p24.1 envelope protein.</text>
</comment>
<comment type="miscellaneous">
    <text>The genome contains a high percentage of proviral-like elements, also called endogenous retroviruses (ERVs) that are the genomic traces of ancient infections of the germline by exogenous retroviruses. Although most of these elements are defective, some have conserved a functional envelope (env) gene, most probably diverted by the host for its benefit.</text>
</comment>
<comment type="similarity">
    <text evidence="7">Belongs to the gamma type-C retroviral envelope protein family. HERV class-I FRD env subfamily.</text>
</comment>
<comment type="caution">
    <text evidence="7">CKS-17 sequence does not match the minimal active consensus.</text>
</comment>
<evidence type="ECO:0000250" key="1"/>
<evidence type="ECO:0000250" key="2">
    <source>
        <dbReference type="UniProtKB" id="P23064"/>
    </source>
</evidence>
<evidence type="ECO:0000250" key="3">
    <source>
        <dbReference type="UniProtKB" id="P60508"/>
    </source>
</evidence>
<evidence type="ECO:0000250" key="4">
    <source>
        <dbReference type="UniProtKB" id="Q9UQF0"/>
    </source>
</evidence>
<evidence type="ECO:0000255" key="5"/>
<evidence type="ECO:0000269" key="6">
    <source>
    </source>
</evidence>
<evidence type="ECO:0000305" key="7"/>
<proteinExistence type="inferred from homology"/>
<dbReference type="EMBL" id="AJ577596">
    <property type="protein sequence ID" value="CAE12263.1"/>
    <property type="molecule type" value="Genomic_DNA"/>
</dbReference>
<dbReference type="SMR" id="P61554"/>
<dbReference type="FunCoup" id="P61554">
    <property type="interactions" value="2"/>
</dbReference>
<dbReference type="STRING" id="9593.ENSGGOP00000021598"/>
<dbReference type="GlyCosmos" id="P61554">
    <property type="glycosylation" value="9 sites, No reported glycans"/>
</dbReference>
<dbReference type="eggNOG" id="ENOG502SD08">
    <property type="taxonomic scope" value="Eukaryota"/>
</dbReference>
<dbReference type="InParanoid" id="P61554"/>
<dbReference type="Proteomes" id="UP000001519">
    <property type="component" value="Unplaced"/>
</dbReference>
<dbReference type="GO" id="GO:0005886">
    <property type="term" value="C:plasma membrane"/>
    <property type="evidence" value="ECO:0007669"/>
    <property type="project" value="UniProtKB-SubCell"/>
</dbReference>
<dbReference type="GO" id="GO:0006949">
    <property type="term" value="P:syncytium formation"/>
    <property type="evidence" value="ECO:0000250"/>
    <property type="project" value="UniProtKB"/>
</dbReference>
<dbReference type="GO" id="GO:0000768">
    <property type="term" value="P:syncytium formation by plasma membrane fusion"/>
    <property type="evidence" value="ECO:0000314"/>
    <property type="project" value="UniProtKB"/>
</dbReference>
<dbReference type="CDD" id="cd09851">
    <property type="entry name" value="HTLV-1-like_HR1-HR2"/>
    <property type="match status" value="1"/>
</dbReference>
<dbReference type="FunFam" id="1.10.287.210:FF:000002">
    <property type="entry name" value="Syncytin-2"/>
    <property type="match status" value="1"/>
</dbReference>
<dbReference type="Gene3D" id="1.10.287.210">
    <property type="match status" value="1"/>
</dbReference>
<dbReference type="InterPro" id="IPR018154">
    <property type="entry name" value="TLV/ENV_coat_polyprotein"/>
</dbReference>
<dbReference type="PANTHER" id="PTHR10424:SF85">
    <property type="entry name" value="SYNCYTIN-2"/>
    <property type="match status" value="1"/>
</dbReference>
<dbReference type="PANTHER" id="PTHR10424">
    <property type="entry name" value="VIRAL ENVELOPE PROTEIN"/>
    <property type="match status" value="1"/>
</dbReference>
<dbReference type="Pfam" id="PF00429">
    <property type="entry name" value="TLV_coat"/>
    <property type="match status" value="1"/>
</dbReference>
<dbReference type="SUPFAM" id="SSF58069">
    <property type="entry name" value="Virus ectodomain"/>
    <property type="match status" value="1"/>
</dbReference>
<reference key="1">
    <citation type="journal article" date="2003" name="Proc. Natl. Acad. Sci. U.S.A.">
        <title>Genomewide screening for fusogenic human endogenous retrovirus envelopes identifies syncytin 2, a gene conserved on primate evolution.</title>
        <authorList>
            <person name="Blaise S."/>
            <person name="de Parseval N."/>
            <person name="Benit L."/>
            <person name="Heidmann T."/>
        </authorList>
    </citation>
    <scope>NUCLEOTIDE SEQUENCE [GENOMIC DNA]</scope>
</reference>
<reference key="2">
    <citation type="journal article" date="2004" name="J. Virol.">
        <title>Identification of an envelope protein from the FRD family of human endogenous retroviruses (HERV-FRD) conferring infectivity and functional conservation among simians.</title>
        <authorList>
            <person name="Blaise S."/>
            <person name="Ruggieri A."/>
            <person name="Dewannieux M."/>
            <person name="Cosset F.-L."/>
            <person name="Heidmann T."/>
        </authorList>
    </citation>
    <scope>FUNCTION</scope>
</reference>
<name>SYCY2_GORGO</name>
<gene>
    <name type="primary">ERVFRD-1</name>
    <name type="synonym">ERVFRDE1</name>
</gene>
<keyword id="KW-1003">Cell membrane</keyword>
<keyword id="KW-0165">Cleavage on pair of basic residues</keyword>
<keyword id="KW-1015">Disulfide bond</keyword>
<keyword id="KW-0895">ERV</keyword>
<keyword id="KW-0325">Glycoprotein</keyword>
<keyword id="KW-0472">Membrane</keyword>
<keyword id="KW-1185">Reference proteome</keyword>
<keyword id="KW-0732">Signal</keyword>
<keyword id="KW-0812">Transmembrane</keyword>
<keyword id="KW-1133">Transmembrane helix</keyword>
<keyword id="KW-0814">Transposable element</keyword>
<keyword id="KW-0261">Viral envelope protein</keyword>
<keyword id="KW-0946">Virion</keyword>
<sequence length="538" mass="59569">MGLLLLVLILTPSLAAYRHPDFPLLEKAQQLLQSTGSPYSTNCWLCTSSSTETPGTAYPASPREWTSIEAELHISYRWDPNLKGLMRPANSLLSTVKQDFPDIRQKPPIFGPIFTNINLMGIAPICVTAKRKNGTNVGTLPSTVCNVTFTVDSNQQTYQTYTHNQFRHQPRFPKPPNITFPQGTLLDKSSRFCQGRPSSCSTRNFWFRPADYNQCLQISNLSSTAEWVLLDQTRNSLFWENKTKGANQSQTPCVQVLAGMTIATSYLGISAVSEFFGTSLTPLFHFHISTCLKTQGAFYICGQLIHQCLPSNWTGTCTIGYVTPDIFIAPGNLSLPIPIYGNSQLPRVRRAIHFIPLLAGLGILAGTGTGIAGITKASLTYSQLSKEIANNIDTMAKALTTMQEQIDSLAAVVLQNRRGLDMLTAAQGGICLALDEKCCFWVNQSGKVQDNIRQLLNQASSLRERATQGWLNWEGTWKWFSWVLPLTGPLVSLLLLLLFGPCLLNLITQFVSSRLQAIKLQTNLSAGRRPRNIQESPF</sequence>
<protein>
    <recommendedName>
        <fullName>Syncytin-2</fullName>
    </recommendedName>
    <alternativeName>
        <fullName>ERV-FRD provirus ancestral Env polyprotein</fullName>
    </alternativeName>
    <alternativeName>
        <fullName>Envelope polyprotein</fullName>
    </alternativeName>
    <component>
        <recommendedName>
            <fullName>Surface protein</fullName>
            <shortName>SU</shortName>
        </recommendedName>
    </component>
    <component>
        <recommendedName>
            <fullName>Transmembrane protein</fullName>
            <shortName>TM</shortName>
        </recommendedName>
    </component>
</protein>
<feature type="signal peptide" evidence="5">
    <location>
        <begin position="1"/>
        <end position="15"/>
    </location>
</feature>
<feature type="chain" id="PRO_0000008445" description="Syncytin-2">
    <location>
        <begin position="16"/>
        <end position="538"/>
    </location>
</feature>
<feature type="chain" id="PRO_0000008446" description="Surface protein" evidence="1">
    <location>
        <begin position="16"/>
        <end position="350"/>
    </location>
</feature>
<feature type="chain" id="PRO_0000008447" description="Transmembrane protein" evidence="1">
    <location>
        <begin position="351"/>
        <end position="538"/>
    </location>
</feature>
<feature type="topological domain" description="Extracellular" evidence="5">
    <location>
        <begin position="16"/>
        <end position="478"/>
    </location>
</feature>
<feature type="transmembrane region" description="Helical" evidence="5">
    <location>
        <begin position="479"/>
        <end position="499"/>
    </location>
</feature>
<feature type="topological domain" description="Cytoplasmic" evidence="5">
    <location>
        <begin position="500"/>
        <end position="538"/>
    </location>
</feature>
<feature type="region of interest" description="Fusion peptide" evidence="5">
    <location>
        <begin position="354"/>
        <end position="374"/>
    </location>
</feature>
<feature type="short sequence motif" description="CXXC" evidence="7">
    <location>
        <begin position="43"/>
        <end position="46"/>
    </location>
</feature>
<feature type="short sequence motif" description="CKS-17" evidence="1">
    <location>
        <begin position="414"/>
        <end position="430"/>
    </location>
</feature>
<feature type="short sequence motif" description="CX6CC" evidence="7">
    <location>
        <begin position="431"/>
        <end position="439"/>
    </location>
</feature>
<feature type="site" description="Cleavage" evidence="4">
    <location>
        <begin position="350"/>
        <end position="351"/>
    </location>
</feature>
<feature type="glycosylation site" description="N-linked (GlcNAc...) asparagine" evidence="5">
    <location>
        <position position="133"/>
    </location>
</feature>
<feature type="glycosylation site" description="N-linked (GlcNAc...) asparagine" evidence="5">
    <location>
        <position position="146"/>
    </location>
</feature>
<feature type="glycosylation site" description="N-linked (GlcNAc...) asparagine" evidence="5">
    <location>
        <position position="177"/>
    </location>
</feature>
<feature type="glycosylation site" description="N-linked (GlcNAc...) asparagine" evidence="5">
    <location>
        <position position="220"/>
    </location>
</feature>
<feature type="glycosylation site" description="N-linked (GlcNAc...) asparagine" evidence="5">
    <location>
        <position position="241"/>
    </location>
</feature>
<feature type="glycosylation site" description="N-linked (GlcNAc...) asparagine" evidence="5">
    <location>
        <position position="247"/>
    </location>
</feature>
<feature type="glycosylation site" description="N-linked (GlcNAc...) asparagine" evidence="5">
    <location>
        <position position="312"/>
    </location>
</feature>
<feature type="glycosylation site" description="N-linked (GlcNAc...) asparagine" evidence="5">
    <location>
        <position position="332"/>
    </location>
</feature>
<feature type="glycosylation site" description="N-linked (GlcNAc...) asparagine" evidence="5">
    <location>
        <position position="443"/>
    </location>
</feature>
<feature type="disulfide bond" description="Interchain (between SU and TM chains, or C-46 with C-439); in linked form" evidence="4">
    <location>
        <begin position="43"/>
        <end position="439"/>
    </location>
</feature>
<feature type="disulfide bond" evidence="2">
    <location>
        <begin position="43"/>
        <end position="46"/>
    </location>
</feature>
<feature type="disulfide bond" evidence="3">
    <location>
        <begin position="431"/>
        <end position="438"/>
    </location>
</feature>